<keyword id="KW-0648">Protein biosynthesis</keyword>
<keyword id="KW-1185">Reference proteome</keyword>
<keyword id="KW-0808">Transferase</keyword>
<dbReference type="EC" id="2.1.2.9" evidence="1"/>
<dbReference type="EMBL" id="AE016822">
    <property type="protein sequence ID" value="AAT88968.1"/>
    <property type="molecule type" value="Genomic_DNA"/>
</dbReference>
<dbReference type="RefSeq" id="WP_011185964.1">
    <property type="nucleotide sequence ID" value="NC_006087.1"/>
</dbReference>
<dbReference type="SMR" id="Q6AF77"/>
<dbReference type="STRING" id="281090.Lxx11170"/>
<dbReference type="KEGG" id="lxx:Lxx11170"/>
<dbReference type="eggNOG" id="COG0223">
    <property type="taxonomic scope" value="Bacteria"/>
</dbReference>
<dbReference type="HOGENOM" id="CLU_033347_1_0_11"/>
<dbReference type="Proteomes" id="UP000001306">
    <property type="component" value="Chromosome"/>
</dbReference>
<dbReference type="GO" id="GO:0005829">
    <property type="term" value="C:cytosol"/>
    <property type="evidence" value="ECO:0007669"/>
    <property type="project" value="TreeGrafter"/>
</dbReference>
<dbReference type="GO" id="GO:0004479">
    <property type="term" value="F:methionyl-tRNA formyltransferase activity"/>
    <property type="evidence" value="ECO:0007669"/>
    <property type="project" value="UniProtKB-UniRule"/>
</dbReference>
<dbReference type="CDD" id="cd08646">
    <property type="entry name" value="FMT_core_Met-tRNA-FMT_N"/>
    <property type="match status" value="1"/>
</dbReference>
<dbReference type="CDD" id="cd08704">
    <property type="entry name" value="Met_tRNA_FMT_C"/>
    <property type="match status" value="1"/>
</dbReference>
<dbReference type="Gene3D" id="3.40.50.12230">
    <property type="match status" value="1"/>
</dbReference>
<dbReference type="HAMAP" id="MF_00182">
    <property type="entry name" value="Formyl_trans"/>
    <property type="match status" value="1"/>
</dbReference>
<dbReference type="InterPro" id="IPR005794">
    <property type="entry name" value="Fmt"/>
</dbReference>
<dbReference type="InterPro" id="IPR005793">
    <property type="entry name" value="Formyl_trans_C"/>
</dbReference>
<dbReference type="InterPro" id="IPR002376">
    <property type="entry name" value="Formyl_transf_N"/>
</dbReference>
<dbReference type="InterPro" id="IPR036477">
    <property type="entry name" value="Formyl_transf_N_sf"/>
</dbReference>
<dbReference type="InterPro" id="IPR011034">
    <property type="entry name" value="Formyl_transferase-like_C_sf"/>
</dbReference>
<dbReference type="InterPro" id="IPR044135">
    <property type="entry name" value="Met-tRNA-FMT_C"/>
</dbReference>
<dbReference type="InterPro" id="IPR041711">
    <property type="entry name" value="Met-tRNA-FMT_N"/>
</dbReference>
<dbReference type="NCBIfam" id="TIGR00460">
    <property type="entry name" value="fmt"/>
    <property type="match status" value="1"/>
</dbReference>
<dbReference type="PANTHER" id="PTHR11138">
    <property type="entry name" value="METHIONYL-TRNA FORMYLTRANSFERASE"/>
    <property type="match status" value="1"/>
</dbReference>
<dbReference type="PANTHER" id="PTHR11138:SF5">
    <property type="entry name" value="METHIONYL-TRNA FORMYLTRANSFERASE, MITOCHONDRIAL"/>
    <property type="match status" value="1"/>
</dbReference>
<dbReference type="Pfam" id="PF02911">
    <property type="entry name" value="Formyl_trans_C"/>
    <property type="match status" value="1"/>
</dbReference>
<dbReference type="Pfam" id="PF00551">
    <property type="entry name" value="Formyl_trans_N"/>
    <property type="match status" value="1"/>
</dbReference>
<dbReference type="SUPFAM" id="SSF50486">
    <property type="entry name" value="FMT C-terminal domain-like"/>
    <property type="match status" value="1"/>
</dbReference>
<dbReference type="SUPFAM" id="SSF53328">
    <property type="entry name" value="Formyltransferase"/>
    <property type="match status" value="1"/>
</dbReference>
<organism>
    <name type="scientific">Leifsonia xyli subsp. xyli (strain CTCB07)</name>
    <dbReference type="NCBI Taxonomy" id="281090"/>
    <lineage>
        <taxon>Bacteria</taxon>
        <taxon>Bacillati</taxon>
        <taxon>Actinomycetota</taxon>
        <taxon>Actinomycetes</taxon>
        <taxon>Micrococcales</taxon>
        <taxon>Microbacteriaceae</taxon>
        <taxon>Leifsonia</taxon>
    </lineage>
</organism>
<accession>Q6AF77</accession>
<reference key="1">
    <citation type="journal article" date="2004" name="Mol. Plant Microbe Interact.">
        <title>The genome sequence of the Gram-positive sugarcane pathogen Leifsonia xyli subsp. xyli.</title>
        <authorList>
            <person name="Monteiro-Vitorello C.B."/>
            <person name="Camargo L.E.A."/>
            <person name="Van Sluys M.A."/>
            <person name="Kitajima J.P."/>
            <person name="Truffi D."/>
            <person name="do Amaral A.M."/>
            <person name="Harakava R."/>
            <person name="de Oliveira J.C.F."/>
            <person name="Wood D."/>
            <person name="de Oliveira M.C."/>
            <person name="Miyaki C.Y."/>
            <person name="Takita M.A."/>
            <person name="da Silva A.C.R."/>
            <person name="Furlan L.R."/>
            <person name="Carraro D.M."/>
            <person name="Camarotte G."/>
            <person name="Almeida N.F. Jr."/>
            <person name="Carrer H."/>
            <person name="Coutinho L.L."/>
            <person name="El-Dorry H.A."/>
            <person name="Ferro M.I.T."/>
            <person name="Gagliardi P.R."/>
            <person name="Giglioti E."/>
            <person name="Goldman M.H.S."/>
            <person name="Goldman G.H."/>
            <person name="Kimura E.T."/>
            <person name="Ferro E.S."/>
            <person name="Kuramae E.E."/>
            <person name="Lemos E.G.M."/>
            <person name="Lemos M.V.F."/>
            <person name="Mauro S.M.Z."/>
            <person name="Machado M.A."/>
            <person name="Marino C.L."/>
            <person name="Menck C.F."/>
            <person name="Nunes L.R."/>
            <person name="Oliveira R.C."/>
            <person name="Pereira G.G."/>
            <person name="Siqueira W."/>
            <person name="de Souza A.A."/>
            <person name="Tsai S.M."/>
            <person name="Zanca A.S."/>
            <person name="Simpson A.J.G."/>
            <person name="Brumbley S.M."/>
            <person name="Setubal J.C."/>
        </authorList>
    </citation>
    <scope>NUCLEOTIDE SEQUENCE [LARGE SCALE GENOMIC DNA]</scope>
    <source>
        <strain>CTCB07</strain>
    </source>
</reference>
<sequence length="302" mass="31810">MRLVFAGTPAVAVPSLTALAARFEVAAVITREDAPLGRKRILTPSPVAIAAEELGLSVIRANRLREEAIERVRVLRPDVGVVVAYGGLVHEPLLSLPRRGWVNLHFSLLPRWRGAAPVQHALIAGDRETGAAVFQLVPELDAGDVFGELRRLIRPDETAGELLDDLARSGARLLADTVAALADGTAVATPQSGEPVAAPKLGIADAKLDLTRPADEVYARFRGVTPEPGAWALLDGERFKIHAVRPTAAGVLPPGAVVADGKRILAGTGSRPLELVTVQPAGKRVMAAADWWRGAGGEAVLS</sequence>
<comment type="function">
    <text evidence="1">Attaches a formyl group to the free amino group of methionyl-tRNA(fMet). The formyl group appears to play a dual role in the initiator identity of N-formylmethionyl-tRNA by promoting its recognition by IF2 and preventing the misappropriation of this tRNA by the elongation apparatus.</text>
</comment>
<comment type="catalytic activity">
    <reaction evidence="1">
        <text>L-methionyl-tRNA(fMet) + (6R)-10-formyltetrahydrofolate = N-formyl-L-methionyl-tRNA(fMet) + (6S)-5,6,7,8-tetrahydrofolate + H(+)</text>
        <dbReference type="Rhea" id="RHEA:24380"/>
        <dbReference type="Rhea" id="RHEA-COMP:9952"/>
        <dbReference type="Rhea" id="RHEA-COMP:9953"/>
        <dbReference type="ChEBI" id="CHEBI:15378"/>
        <dbReference type="ChEBI" id="CHEBI:57453"/>
        <dbReference type="ChEBI" id="CHEBI:78530"/>
        <dbReference type="ChEBI" id="CHEBI:78844"/>
        <dbReference type="ChEBI" id="CHEBI:195366"/>
        <dbReference type="EC" id="2.1.2.9"/>
    </reaction>
</comment>
<comment type="similarity">
    <text evidence="1">Belongs to the Fmt family.</text>
</comment>
<feature type="chain" id="PRO_0000082984" description="Methionyl-tRNA formyltransferase">
    <location>
        <begin position="1"/>
        <end position="302"/>
    </location>
</feature>
<feature type="binding site" evidence="1">
    <location>
        <begin position="107"/>
        <end position="110"/>
    </location>
    <ligand>
        <name>(6S)-5,6,7,8-tetrahydrofolate</name>
        <dbReference type="ChEBI" id="CHEBI:57453"/>
    </ligand>
</feature>
<name>FMT_LEIXX</name>
<gene>
    <name evidence="1" type="primary">fmt</name>
    <name type="ordered locus">Lxx11170</name>
</gene>
<proteinExistence type="inferred from homology"/>
<evidence type="ECO:0000255" key="1">
    <source>
        <dbReference type="HAMAP-Rule" id="MF_00182"/>
    </source>
</evidence>
<protein>
    <recommendedName>
        <fullName evidence="1">Methionyl-tRNA formyltransferase</fullName>
        <ecNumber evidence="1">2.1.2.9</ecNumber>
    </recommendedName>
</protein>